<reference key="1">
    <citation type="journal article" date="2002" name="Nature">
        <title>The genome sequence of Schizosaccharomyces pombe.</title>
        <authorList>
            <person name="Wood V."/>
            <person name="Gwilliam R."/>
            <person name="Rajandream M.A."/>
            <person name="Lyne M.H."/>
            <person name="Lyne R."/>
            <person name="Stewart A."/>
            <person name="Sgouros J.G."/>
            <person name="Peat N."/>
            <person name="Hayles J."/>
            <person name="Baker S.G."/>
            <person name="Basham D."/>
            <person name="Bowman S."/>
            <person name="Brooks K."/>
            <person name="Brown D."/>
            <person name="Brown S."/>
            <person name="Chillingworth T."/>
            <person name="Churcher C.M."/>
            <person name="Collins M."/>
            <person name="Connor R."/>
            <person name="Cronin A."/>
            <person name="Davis P."/>
            <person name="Feltwell T."/>
            <person name="Fraser A."/>
            <person name="Gentles S."/>
            <person name="Goble A."/>
            <person name="Hamlin N."/>
            <person name="Harris D.E."/>
            <person name="Hidalgo J."/>
            <person name="Hodgson G."/>
            <person name="Holroyd S."/>
            <person name="Hornsby T."/>
            <person name="Howarth S."/>
            <person name="Huckle E.J."/>
            <person name="Hunt S."/>
            <person name="Jagels K."/>
            <person name="James K.D."/>
            <person name="Jones L."/>
            <person name="Jones M."/>
            <person name="Leather S."/>
            <person name="McDonald S."/>
            <person name="McLean J."/>
            <person name="Mooney P."/>
            <person name="Moule S."/>
            <person name="Mungall K.L."/>
            <person name="Murphy L.D."/>
            <person name="Niblett D."/>
            <person name="Odell C."/>
            <person name="Oliver K."/>
            <person name="O'Neil S."/>
            <person name="Pearson D."/>
            <person name="Quail M.A."/>
            <person name="Rabbinowitsch E."/>
            <person name="Rutherford K.M."/>
            <person name="Rutter S."/>
            <person name="Saunders D."/>
            <person name="Seeger K."/>
            <person name="Sharp S."/>
            <person name="Skelton J."/>
            <person name="Simmonds M.N."/>
            <person name="Squares R."/>
            <person name="Squares S."/>
            <person name="Stevens K."/>
            <person name="Taylor K."/>
            <person name="Taylor R.G."/>
            <person name="Tivey A."/>
            <person name="Walsh S.V."/>
            <person name="Warren T."/>
            <person name="Whitehead S."/>
            <person name="Woodward J.R."/>
            <person name="Volckaert G."/>
            <person name="Aert R."/>
            <person name="Robben J."/>
            <person name="Grymonprez B."/>
            <person name="Weltjens I."/>
            <person name="Vanstreels E."/>
            <person name="Rieger M."/>
            <person name="Schaefer M."/>
            <person name="Mueller-Auer S."/>
            <person name="Gabel C."/>
            <person name="Fuchs M."/>
            <person name="Duesterhoeft A."/>
            <person name="Fritzc C."/>
            <person name="Holzer E."/>
            <person name="Moestl D."/>
            <person name="Hilbert H."/>
            <person name="Borzym K."/>
            <person name="Langer I."/>
            <person name="Beck A."/>
            <person name="Lehrach H."/>
            <person name="Reinhardt R."/>
            <person name="Pohl T.M."/>
            <person name="Eger P."/>
            <person name="Zimmermann W."/>
            <person name="Wedler H."/>
            <person name="Wambutt R."/>
            <person name="Purnelle B."/>
            <person name="Goffeau A."/>
            <person name="Cadieu E."/>
            <person name="Dreano S."/>
            <person name="Gloux S."/>
            <person name="Lelaure V."/>
            <person name="Mottier S."/>
            <person name="Galibert F."/>
            <person name="Aves S.J."/>
            <person name="Xiang Z."/>
            <person name="Hunt C."/>
            <person name="Moore K."/>
            <person name="Hurst S.M."/>
            <person name="Lucas M."/>
            <person name="Rochet M."/>
            <person name="Gaillardin C."/>
            <person name="Tallada V.A."/>
            <person name="Garzon A."/>
            <person name="Thode G."/>
            <person name="Daga R.R."/>
            <person name="Cruzado L."/>
            <person name="Jimenez J."/>
            <person name="Sanchez M."/>
            <person name="del Rey F."/>
            <person name="Benito J."/>
            <person name="Dominguez A."/>
            <person name="Revuelta J.L."/>
            <person name="Moreno S."/>
            <person name="Armstrong J."/>
            <person name="Forsburg S.L."/>
            <person name="Cerutti L."/>
            <person name="Lowe T."/>
            <person name="McCombie W.R."/>
            <person name="Paulsen I."/>
            <person name="Potashkin J."/>
            <person name="Shpakovski G.V."/>
            <person name="Ussery D."/>
            <person name="Barrell B.G."/>
            <person name="Nurse P."/>
        </authorList>
    </citation>
    <scope>NUCLEOTIDE SEQUENCE [LARGE SCALE GENOMIC DNA]</scope>
    <source>
        <strain>972 / ATCC 24843</strain>
    </source>
</reference>
<reference key="2">
    <citation type="journal article" date="2006" name="Nat. Biotechnol.">
        <title>ORFeome cloning and global analysis of protein localization in the fission yeast Schizosaccharomyces pombe.</title>
        <authorList>
            <person name="Matsuyama A."/>
            <person name="Arai R."/>
            <person name="Yashiroda Y."/>
            <person name="Shirai A."/>
            <person name="Kamata A."/>
            <person name="Sekido S."/>
            <person name="Kobayashi Y."/>
            <person name="Hashimoto A."/>
            <person name="Hamamoto M."/>
            <person name="Hiraoka Y."/>
            <person name="Horinouchi S."/>
            <person name="Yoshida M."/>
        </authorList>
    </citation>
    <scope>SUBCELLULAR LOCATION [LARGE SCALE ANALYSIS]</scope>
</reference>
<reference key="3">
    <citation type="journal article" date="2008" name="J. Proteome Res.">
        <title>Phosphoproteome analysis of fission yeast.</title>
        <authorList>
            <person name="Wilson-Grady J.T."/>
            <person name="Villen J."/>
            <person name="Gygi S.P."/>
        </authorList>
    </citation>
    <scope>PHOSPHORYLATION [LARGE SCALE ANALYSIS] AT SER-12</scope>
    <scope>IDENTIFICATION BY MASS SPECTROMETRY</scope>
</reference>
<name>CDS1_SCHPO</name>
<accession>Q9P381</accession>
<dbReference type="EC" id="2.7.7.41"/>
<dbReference type="EMBL" id="CU329671">
    <property type="protein sequence ID" value="CAB99396.1"/>
    <property type="molecule type" value="Genomic_DNA"/>
</dbReference>
<dbReference type="FunCoup" id="Q9P381">
    <property type="interactions" value="514"/>
</dbReference>
<dbReference type="STRING" id="284812.Q9P381"/>
<dbReference type="iPTMnet" id="Q9P381"/>
<dbReference type="PaxDb" id="4896-SPBC13A2.03.1"/>
<dbReference type="EnsemblFungi" id="SPBC13A2.03.1">
    <property type="protein sequence ID" value="SPBC13A2.03.1:pep"/>
    <property type="gene ID" value="SPBC13A2.03"/>
</dbReference>
<dbReference type="KEGG" id="spo:2540017"/>
<dbReference type="PomBase" id="SPBC13A2.03"/>
<dbReference type="VEuPathDB" id="FungiDB:SPBC13A2.03"/>
<dbReference type="eggNOG" id="KOG1440">
    <property type="taxonomic scope" value="Eukaryota"/>
</dbReference>
<dbReference type="HOGENOM" id="CLU_023471_1_1_1"/>
<dbReference type="InParanoid" id="Q9P381"/>
<dbReference type="OMA" id="FFAYMYF"/>
<dbReference type="PhylomeDB" id="Q9P381"/>
<dbReference type="BRENDA" id="2.7.7.41">
    <property type="organism ID" value="5613"/>
</dbReference>
<dbReference type="Reactome" id="R-SPO-1483148">
    <property type="pathway name" value="Synthesis of PG"/>
</dbReference>
<dbReference type="Reactome" id="R-SPO-1483226">
    <property type="pathway name" value="Synthesis of PI"/>
</dbReference>
<dbReference type="UniPathway" id="UPA00557">
    <property type="reaction ID" value="UER00614"/>
</dbReference>
<dbReference type="PRO" id="PR:Q9P381"/>
<dbReference type="Proteomes" id="UP000002485">
    <property type="component" value="Chromosome II"/>
</dbReference>
<dbReference type="GO" id="GO:0005783">
    <property type="term" value="C:endoplasmic reticulum"/>
    <property type="evidence" value="ECO:0007005"/>
    <property type="project" value="PomBase"/>
</dbReference>
<dbReference type="GO" id="GO:0005789">
    <property type="term" value="C:endoplasmic reticulum membrane"/>
    <property type="evidence" value="ECO:0000318"/>
    <property type="project" value="GO_Central"/>
</dbReference>
<dbReference type="GO" id="GO:0004605">
    <property type="term" value="F:phosphatidate cytidylyltransferase activity"/>
    <property type="evidence" value="ECO:0000314"/>
    <property type="project" value="PomBase"/>
</dbReference>
<dbReference type="GO" id="GO:0016024">
    <property type="term" value="P:CDP-diacylglycerol biosynthetic process"/>
    <property type="evidence" value="ECO:0000314"/>
    <property type="project" value="PomBase"/>
</dbReference>
<dbReference type="InterPro" id="IPR000374">
    <property type="entry name" value="PC_trans"/>
</dbReference>
<dbReference type="InterPro" id="IPR016720">
    <property type="entry name" value="PC_Trfase_euk"/>
</dbReference>
<dbReference type="PANTHER" id="PTHR13773">
    <property type="entry name" value="PHOSPHATIDATE CYTIDYLYLTRANSFERASE"/>
    <property type="match status" value="1"/>
</dbReference>
<dbReference type="PANTHER" id="PTHR13773:SF8">
    <property type="entry name" value="PHOSPHATIDATE CYTIDYLYLTRANSFERASE, PHOTORECEPTOR-SPECIFIC"/>
    <property type="match status" value="1"/>
</dbReference>
<dbReference type="Pfam" id="PF01148">
    <property type="entry name" value="CTP_transf_1"/>
    <property type="match status" value="1"/>
</dbReference>
<dbReference type="PIRSF" id="PIRSF018269">
    <property type="entry name" value="PC_trans_euk"/>
    <property type="match status" value="1"/>
</dbReference>
<dbReference type="PROSITE" id="PS01315">
    <property type="entry name" value="CDS"/>
    <property type="match status" value="1"/>
</dbReference>
<keyword id="KW-0256">Endoplasmic reticulum</keyword>
<keyword id="KW-0444">Lipid biosynthesis</keyword>
<keyword id="KW-0443">Lipid metabolism</keyword>
<keyword id="KW-0460">Magnesium</keyword>
<keyword id="KW-0472">Membrane</keyword>
<keyword id="KW-0548">Nucleotidyltransferase</keyword>
<keyword id="KW-0594">Phospholipid biosynthesis</keyword>
<keyword id="KW-1208">Phospholipid metabolism</keyword>
<keyword id="KW-0597">Phosphoprotein</keyword>
<keyword id="KW-1185">Reference proteome</keyword>
<keyword id="KW-0808">Transferase</keyword>
<keyword id="KW-0812">Transmembrane</keyword>
<keyword id="KW-1133">Transmembrane helix</keyword>
<sequence>MARKRTNKRNNSDKENGNVGVVQNKDSASSKTTEPARLTKHKSLARKPSQNFITRTIWTFLLLGIFFTALAMGHFWVVLLVTIVQIGVYKEVIAIASVPSREKDLPWTRFINWYFLMTTLYYAYGESIYAYFHHLFIMDSFMLPLVLHHRFISFMLYIIGFVLFVASLKKGNYKFQFSQFCWTHMTLLLVVGQSHFMINNLFEGLFWFFVPVCYVVCNDVFAYLCGKMFGKHPLIQVSPKKTVEGFLGGWICTVVIGSLISYVLMHFKYFICPTRDLSTSAFSGLNCTPNSVFLPHTYTIPAVFVDTFRLPETITLAPIYFHLAIFATFSSLIAPFGGFFASGLKRAFKIKDFGASIPGHGGLTDRMDCQFLNGVFVYMYFQSFIAEKSTSVADLLDTAVYSLTTTQQVQLVEDLQNYLISHGKTSVQAICSKLLQNSK</sequence>
<comment type="function">
    <text evidence="1">Supplies CDP-diacylglycerol, which may play an important role as both a precursor to phosphoinositide biosynthesis in the plasma membrane and as a negative effector of phosphatidylinositol 4-kinase activity, thereby exerting an effect on cell proliferation via a lipid-dependent signal transduction cascade.</text>
</comment>
<comment type="catalytic activity">
    <reaction>
        <text>a 1,2-diacyl-sn-glycero-3-phosphate + CTP + H(+) = a CDP-1,2-diacyl-sn-glycerol + diphosphate</text>
        <dbReference type="Rhea" id="RHEA:16229"/>
        <dbReference type="ChEBI" id="CHEBI:15378"/>
        <dbReference type="ChEBI" id="CHEBI:33019"/>
        <dbReference type="ChEBI" id="CHEBI:37563"/>
        <dbReference type="ChEBI" id="CHEBI:58332"/>
        <dbReference type="ChEBI" id="CHEBI:58608"/>
        <dbReference type="EC" id="2.7.7.41"/>
    </reaction>
</comment>
<comment type="cofactor">
    <cofactor evidence="1">
        <name>Mg(2+)</name>
        <dbReference type="ChEBI" id="CHEBI:18420"/>
    </cofactor>
</comment>
<comment type="pathway">
    <text>Phospholipid metabolism; CDP-diacylglycerol biosynthesis; CDP-diacylglycerol from sn-glycerol 3-phosphate: step 3/3.</text>
</comment>
<comment type="subcellular location">
    <subcellularLocation>
        <location evidence="4">Endoplasmic reticulum membrane</location>
        <topology evidence="4">Multi-pass membrane protein</topology>
    </subcellularLocation>
</comment>
<comment type="similarity">
    <text evidence="6">Belongs to the CDS family.</text>
</comment>
<organism>
    <name type="scientific">Schizosaccharomyces pombe (strain 972 / ATCC 24843)</name>
    <name type="common">Fission yeast</name>
    <dbReference type="NCBI Taxonomy" id="284812"/>
    <lineage>
        <taxon>Eukaryota</taxon>
        <taxon>Fungi</taxon>
        <taxon>Dikarya</taxon>
        <taxon>Ascomycota</taxon>
        <taxon>Taphrinomycotina</taxon>
        <taxon>Schizosaccharomycetes</taxon>
        <taxon>Schizosaccharomycetales</taxon>
        <taxon>Schizosaccharomycetaceae</taxon>
        <taxon>Schizosaccharomyces</taxon>
    </lineage>
</organism>
<protein>
    <recommendedName>
        <fullName>Putative phosphatidate cytidylyltransferase</fullName>
        <ecNumber>2.7.7.41</ecNumber>
    </recommendedName>
    <alternativeName>
        <fullName>CDP-DAG synthase</fullName>
    </alternativeName>
    <alternativeName>
        <fullName>CDP-DG synthase</fullName>
    </alternativeName>
    <alternativeName>
        <fullName>CDP-diacylglycerol synthase</fullName>
        <shortName>CDS</shortName>
    </alternativeName>
    <alternativeName>
        <fullName>CDP-diglyceride pyrophosphorylase</fullName>
    </alternativeName>
    <alternativeName>
        <fullName>CDP-diglyceride synthase</fullName>
    </alternativeName>
    <alternativeName>
        <fullName>CTP:phosphatidate cytidylyltransferase</fullName>
    </alternativeName>
</protein>
<evidence type="ECO:0000250" key="1"/>
<evidence type="ECO:0000255" key="2"/>
<evidence type="ECO:0000256" key="3">
    <source>
        <dbReference type="SAM" id="MobiDB-lite"/>
    </source>
</evidence>
<evidence type="ECO:0000269" key="4">
    <source>
    </source>
</evidence>
<evidence type="ECO:0000269" key="5">
    <source>
    </source>
</evidence>
<evidence type="ECO:0000305" key="6"/>
<feature type="chain" id="PRO_0000316216" description="Putative phosphatidate cytidylyltransferase">
    <location>
        <begin position="1"/>
        <end position="439"/>
    </location>
</feature>
<feature type="transmembrane region" description="Helical" evidence="2">
    <location>
        <begin position="52"/>
        <end position="71"/>
    </location>
</feature>
<feature type="transmembrane region" description="Helical" evidence="2">
    <location>
        <begin position="76"/>
        <end position="98"/>
    </location>
</feature>
<feature type="transmembrane region" description="Helical" evidence="2">
    <location>
        <begin position="110"/>
        <end position="130"/>
    </location>
</feature>
<feature type="transmembrane region" description="Helical" evidence="2">
    <location>
        <begin position="145"/>
        <end position="165"/>
    </location>
</feature>
<feature type="transmembrane region" description="Helical" evidence="2">
    <location>
        <begin position="180"/>
        <end position="199"/>
    </location>
</feature>
<feature type="transmembrane region" description="Helical" evidence="2">
    <location>
        <begin position="245"/>
        <end position="265"/>
    </location>
</feature>
<feature type="transmembrane region" description="Helical" evidence="2">
    <location>
        <begin position="321"/>
        <end position="341"/>
    </location>
</feature>
<feature type="region of interest" description="Disordered" evidence="3">
    <location>
        <begin position="1"/>
        <end position="37"/>
    </location>
</feature>
<feature type="compositionally biased region" description="Polar residues" evidence="3">
    <location>
        <begin position="24"/>
        <end position="33"/>
    </location>
</feature>
<feature type="modified residue" description="Phosphoserine" evidence="5">
    <location>
        <position position="12"/>
    </location>
</feature>
<proteinExistence type="evidence at protein level"/>
<gene>
    <name type="ORF">SPBC13A2.03</name>
</gene>